<feature type="chain" id="PRO_0000456386" description="Septu protein PtuB">
    <location>
        <begin position="1"/>
        <end position="295"/>
    </location>
</feature>
<evidence type="ECO:0000269" key="1">
    <source>
    </source>
</evidence>
<evidence type="ECO:0000303" key="2">
    <source>
    </source>
</evidence>
<evidence type="ECO:0000305" key="3">
    <source>
    </source>
</evidence>
<evidence type="ECO:0000312" key="4">
    <source>
        <dbReference type="EMBL" id="ABY44615.1"/>
    </source>
</evidence>
<dbReference type="EMBL" id="CP000903">
    <property type="protein sequence ID" value="ABY44615.1"/>
    <property type="molecule type" value="Genomic_DNA"/>
</dbReference>
<dbReference type="RefSeq" id="WP_012261489.1">
    <property type="nucleotide sequence ID" value="NC_010184.1"/>
</dbReference>
<dbReference type="KEGG" id="bwe:BcerKBAB4_3442"/>
<dbReference type="eggNOG" id="COG1403">
    <property type="taxonomic scope" value="Bacteria"/>
</dbReference>
<dbReference type="HOGENOM" id="CLU_071576_0_0_9"/>
<dbReference type="Proteomes" id="UP000002154">
    <property type="component" value="Chromosome"/>
</dbReference>
<dbReference type="GO" id="GO:0004518">
    <property type="term" value="F:nuclease activity"/>
    <property type="evidence" value="ECO:0007669"/>
    <property type="project" value="UniProtKB-KW"/>
</dbReference>
<dbReference type="GO" id="GO:0051607">
    <property type="term" value="P:defense response to virus"/>
    <property type="evidence" value="ECO:0007669"/>
    <property type="project" value="UniProtKB-KW"/>
</dbReference>
<dbReference type="CDD" id="cd00085">
    <property type="entry name" value="HNHc"/>
    <property type="match status" value="1"/>
</dbReference>
<dbReference type="Gene3D" id="1.10.30.50">
    <property type="match status" value="1"/>
</dbReference>
<dbReference type="InterPro" id="IPR013467">
    <property type="entry name" value="HNH78-like"/>
</dbReference>
<dbReference type="InterPro" id="IPR003615">
    <property type="entry name" value="HNH_nuc"/>
</dbReference>
<dbReference type="NCBIfam" id="TIGR02646">
    <property type="entry name" value="retron system putative HNH endonuclease"/>
    <property type="match status" value="1"/>
</dbReference>
<gene>
    <name evidence="2" type="primary">ptuB</name>
    <name evidence="4" type="ordered locus">BcerKBAB4_3442</name>
</gene>
<comment type="function">
    <text evidence="1 3">Component of antiviral defense system Septu type II, composed of PtuA and PtuB. Expression of Septu type II in B.subtilis (strain BEST7003) confers resistance to phages SBSphiC and SpBeta (PubMed:29371424). May be a nuclease (Probable).</text>
</comment>
<comment type="disruption phenotype">
    <text evidence="1">When this gene is missing the Septu type II system does not confer resistance to SpBeta in B.subtilis.</text>
</comment>
<sequence length="295" mass="34094">MIKVQREAEPAVLNLTDSDSIGFKELEAAKKTTFTKDTKFPFEAYKDESVKNLLKKMFNGKCGYCESIINVTSYEEIEHFRPKKAINIEGIQGLTYPGYYWLAMSWNNLLISCQRCNRSHKKNYFPIENESNRAKAPGEESGEEVLLLNPCEDDPSEHLEFKDTGIIEFKEGSKKGEKSIKVYALHRRELTEERAKVAKDIELKKVQILDGLSTLKVLLRYQEDSDLQKEIEKTVSNIISLYDFIFEYENDPNRPYQAMVTQITSDFLSERKELINKLKTTSNRKNSCEQSHISS</sequence>
<keyword id="KW-0051">Antiviral defense</keyword>
<keyword id="KW-0378">Hydrolase</keyword>
<keyword id="KW-0540">Nuclease</keyword>
<name>PTUB_BACMK</name>
<organism>
    <name type="scientific">Bacillus mycoides (strain KBAB4)</name>
    <name type="common">Bacillus weihenstephanensis</name>
    <dbReference type="NCBI Taxonomy" id="315730"/>
    <lineage>
        <taxon>Bacteria</taxon>
        <taxon>Bacillati</taxon>
        <taxon>Bacillota</taxon>
        <taxon>Bacilli</taxon>
        <taxon>Bacillales</taxon>
        <taxon>Bacillaceae</taxon>
        <taxon>Bacillus</taxon>
        <taxon>Bacillus cereus group</taxon>
    </lineage>
</organism>
<accession>A9VQW6</accession>
<protein>
    <recommendedName>
        <fullName evidence="2">Septu protein PtuB</fullName>
    </recommendedName>
    <alternativeName>
        <fullName evidence="2">Putative nuclease PtuB</fullName>
    </alternativeName>
</protein>
<proteinExistence type="predicted"/>
<reference evidence="4" key="1">
    <citation type="journal article" date="2008" name="Chem. Biol. Interact.">
        <title>Extending the Bacillus cereus group genomics to putative food-borne pathogens of different toxicity.</title>
        <authorList>
            <person name="Lapidus A."/>
            <person name="Goltsman E."/>
            <person name="Auger S."/>
            <person name="Galleron N."/>
            <person name="Segurens B."/>
            <person name="Dossat C."/>
            <person name="Land M.L."/>
            <person name="Broussolle V."/>
            <person name="Brillard J."/>
            <person name="Guinebretiere M.-H."/>
            <person name="Sanchis V."/>
            <person name="Nguen-the C."/>
            <person name="Lereclus D."/>
            <person name="Richardson P."/>
            <person name="Wincker P."/>
            <person name="Weissenbach J."/>
            <person name="Ehrlich S.D."/>
            <person name="Sorokin A."/>
        </authorList>
    </citation>
    <scope>NUCLEOTIDE SEQUENCE [LARGE SCALE GENOMIC DNA]</scope>
    <source>
        <strain>KBAB4</strain>
    </source>
</reference>
<reference key="2">
    <citation type="journal article" date="2018" name="Science">
        <title>Systematic discovery of antiphage defense systems in the microbial pangenome.</title>
        <authorList>
            <person name="Doron S."/>
            <person name="Melamed S."/>
            <person name="Ofir G."/>
            <person name="Leavitt A."/>
            <person name="Lopatina A."/>
            <person name="Keren M."/>
            <person name="Amitai G."/>
            <person name="Sorek R."/>
        </authorList>
    </citation>
    <scope>FUNCTION</scope>
    <scope>DISRUPTION PHENOTYPE</scope>
    <scope>EXPRESSION IN B.SUBTILIS</scope>
    <source>
        <strain>KBAB4</strain>
    </source>
</reference>